<feature type="chain" id="PRO_0000371386" description="Probable polyketide synthase 23">
    <location>
        <begin position="1"/>
        <end position="2499"/>
    </location>
</feature>
<feature type="domain" description="Ketosynthase family 3 (KS3)" evidence="3">
    <location>
        <begin position="11"/>
        <end position="430"/>
    </location>
</feature>
<feature type="domain" description="PKS/mFAS DH" evidence="4">
    <location>
        <begin position="924"/>
        <end position="1209"/>
    </location>
</feature>
<feature type="domain" description="Carrier" evidence="2">
    <location>
        <begin position="2414"/>
        <end position="2491"/>
    </location>
</feature>
<feature type="region of interest" description="Acyl/malonyl transferases">
    <location>
        <begin position="623"/>
        <end position="656"/>
    </location>
</feature>
<feature type="region of interest" description="N-terminal hotdog fold" evidence="4">
    <location>
        <begin position="924"/>
        <end position="1044"/>
    </location>
</feature>
<feature type="region of interest" description="C-terminal hotdog fold" evidence="4">
    <location>
        <begin position="1059"/>
        <end position="1209"/>
    </location>
</feature>
<feature type="active site" description="For beta-ketoacyl synthase activity" evidence="3">
    <location>
        <position position="177"/>
    </location>
</feature>
<feature type="active site" description="For beta-ketoacyl synthase activity" evidence="3">
    <location>
        <position position="316"/>
    </location>
</feature>
<feature type="active site" description="For beta-ketoacyl synthase activity" evidence="3">
    <location>
        <position position="354"/>
    </location>
</feature>
<feature type="active site" description="For acyl/malonyl transferase activity" evidence="5">
    <location>
        <position position="633"/>
    </location>
</feature>
<feature type="active site" description="Proton acceptor; for dehydratase activity" evidence="4">
    <location>
        <position position="956"/>
    </location>
</feature>
<feature type="active site" description="Proton donor; for dehydratase activity" evidence="4">
    <location>
        <position position="1121"/>
    </location>
</feature>
<feature type="modified residue" description="O-(pantetheine 4'-phosphoryl)serine" evidence="2">
    <location>
        <position position="2451"/>
    </location>
</feature>
<protein>
    <recommendedName>
        <fullName>Probable polyketide synthase 23</fullName>
        <shortName>dipks23</shortName>
        <ecNumber>2.3.1.-</ecNumber>
    </recommendedName>
</protein>
<reference key="1">
    <citation type="journal article" date="2005" name="Nature">
        <title>The genome of the social amoeba Dictyostelium discoideum.</title>
        <authorList>
            <person name="Eichinger L."/>
            <person name="Pachebat J.A."/>
            <person name="Gloeckner G."/>
            <person name="Rajandream M.A."/>
            <person name="Sucgang R."/>
            <person name="Berriman M."/>
            <person name="Song J."/>
            <person name="Olsen R."/>
            <person name="Szafranski K."/>
            <person name="Xu Q."/>
            <person name="Tunggal B."/>
            <person name="Kummerfeld S."/>
            <person name="Madera M."/>
            <person name="Konfortov B.A."/>
            <person name="Rivero F."/>
            <person name="Bankier A.T."/>
            <person name="Lehmann R."/>
            <person name="Hamlin N."/>
            <person name="Davies R."/>
            <person name="Gaudet P."/>
            <person name="Fey P."/>
            <person name="Pilcher K."/>
            <person name="Chen G."/>
            <person name="Saunders D."/>
            <person name="Sodergren E.J."/>
            <person name="Davis P."/>
            <person name="Kerhornou A."/>
            <person name="Nie X."/>
            <person name="Hall N."/>
            <person name="Anjard C."/>
            <person name="Hemphill L."/>
            <person name="Bason N."/>
            <person name="Farbrother P."/>
            <person name="Desany B."/>
            <person name="Just E."/>
            <person name="Morio T."/>
            <person name="Rost R."/>
            <person name="Churcher C.M."/>
            <person name="Cooper J."/>
            <person name="Haydock S."/>
            <person name="van Driessche N."/>
            <person name="Cronin A."/>
            <person name="Goodhead I."/>
            <person name="Muzny D.M."/>
            <person name="Mourier T."/>
            <person name="Pain A."/>
            <person name="Lu M."/>
            <person name="Harper D."/>
            <person name="Lindsay R."/>
            <person name="Hauser H."/>
            <person name="James K.D."/>
            <person name="Quiles M."/>
            <person name="Madan Babu M."/>
            <person name="Saito T."/>
            <person name="Buchrieser C."/>
            <person name="Wardroper A."/>
            <person name="Felder M."/>
            <person name="Thangavelu M."/>
            <person name="Johnson D."/>
            <person name="Knights A."/>
            <person name="Loulseged H."/>
            <person name="Mungall K.L."/>
            <person name="Oliver K."/>
            <person name="Price C."/>
            <person name="Quail M.A."/>
            <person name="Urushihara H."/>
            <person name="Hernandez J."/>
            <person name="Rabbinowitsch E."/>
            <person name="Steffen D."/>
            <person name="Sanders M."/>
            <person name="Ma J."/>
            <person name="Kohara Y."/>
            <person name="Sharp S."/>
            <person name="Simmonds M.N."/>
            <person name="Spiegler S."/>
            <person name="Tivey A."/>
            <person name="Sugano S."/>
            <person name="White B."/>
            <person name="Walker D."/>
            <person name="Woodward J.R."/>
            <person name="Winckler T."/>
            <person name="Tanaka Y."/>
            <person name="Shaulsky G."/>
            <person name="Schleicher M."/>
            <person name="Weinstock G.M."/>
            <person name="Rosenthal A."/>
            <person name="Cox E.C."/>
            <person name="Chisholm R.L."/>
            <person name="Gibbs R.A."/>
            <person name="Loomis W.F."/>
            <person name="Platzer M."/>
            <person name="Kay R.R."/>
            <person name="Williams J.G."/>
            <person name="Dear P.H."/>
            <person name="Noegel A.A."/>
            <person name="Barrell B.G."/>
            <person name="Kuspa A."/>
        </authorList>
    </citation>
    <scope>NUCLEOTIDE SEQUENCE [LARGE SCALE GENOMIC DNA]</scope>
    <source>
        <strain>AX4</strain>
    </source>
</reference>
<reference key="2">
    <citation type="journal article" date="2007" name="Bioinformatics">
        <title>Polyketide synthase genes and the natural products potential of Dictyostelium discoideum.</title>
        <authorList>
            <person name="Zucko J."/>
            <person name="Skunca N."/>
            <person name="Curk T."/>
            <person name="Zupan B."/>
            <person name="Long P.F."/>
            <person name="Cullum J."/>
            <person name="Kessin R.H."/>
            <person name="Hranueli D."/>
        </authorList>
    </citation>
    <scope>IDENTIFICATION</scope>
</reference>
<gene>
    <name type="primary">pks23</name>
    <name type="ORF">DDB_G0283931</name>
</gene>
<comment type="function">
    <text evidence="1">Probable polyketide synthase.</text>
</comment>
<comment type="cofactor">
    <cofactor evidence="1">
        <name>pantetheine 4'-phosphate</name>
        <dbReference type="ChEBI" id="CHEBI:47942"/>
    </cofactor>
    <text evidence="1">Binds 1 phosphopantetheine covalently.</text>
</comment>
<comment type="domain">
    <text evidence="1">Modular protein that is responsible for the completion of one condensation-processing cycle. The beta-ketoacyl synthase region is responsible for the actual condensation reaction while the acyl/malonyl transferase region is responsible for incorporating carboxylic acids units onto an acyl carrier protein (ACP) domain (By similarity).</text>
</comment>
<comment type="miscellaneous">
    <text>Encoded by one of the numerous copies of polyketide synthase genes and clustered as a pair pks22/pks23 in chromosome 4.</text>
</comment>
<evidence type="ECO:0000250" key="1"/>
<evidence type="ECO:0000255" key="2">
    <source>
        <dbReference type="PROSITE-ProRule" id="PRU00258"/>
    </source>
</evidence>
<evidence type="ECO:0000255" key="3">
    <source>
        <dbReference type="PROSITE-ProRule" id="PRU01348"/>
    </source>
</evidence>
<evidence type="ECO:0000255" key="4">
    <source>
        <dbReference type="PROSITE-ProRule" id="PRU01363"/>
    </source>
</evidence>
<evidence type="ECO:0000255" key="5">
    <source>
        <dbReference type="PROSITE-ProRule" id="PRU10022"/>
    </source>
</evidence>
<dbReference type="EC" id="2.3.1.-"/>
<dbReference type="EMBL" id="AAFI02000058">
    <property type="protein sequence ID" value="EAL65453.1"/>
    <property type="molecule type" value="Genomic_DNA"/>
</dbReference>
<dbReference type="RefSeq" id="XP_638813.1">
    <property type="nucleotide sequence ID" value="XM_633721.1"/>
</dbReference>
<dbReference type="SMR" id="Q54QD1"/>
<dbReference type="FunCoup" id="Q54QD1">
    <property type="interactions" value="1"/>
</dbReference>
<dbReference type="STRING" id="44689.Q54QD1"/>
<dbReference type="PaxDb" id="44689-DDB0230074"/>
<dbReference type="EnsemblProtists" id="EAL65453">
    <property type="protein sequence ID" value="EAL65453"/>
    <property type="gene ID" value="DDB_G0283931"/>
</dbReference>
<dbReference type="GeneID" id="8624337"/>
<dbReference type="KEGG" id="ddi:DDB_G0283931"/>
<dbReference type="dictyBase" id="DDB_G0283931">
    <property type="gene designation" value="pks23"/>
</dbReference>
<dbReference type="VEuPathDB" id="AmoebaDB:DDB_G0283931"/>
<dbReference type="eggNOG" id="KOG1202">
    <property type="taxonomic scope" value="Eukaryota"/>
</dbReference>
<dbReference type="HOGENOM" id="CLU_000022_31_5_1"/>
<dbReference type="InParanoid" id="Q54QD1"/>
<dbReference type="PhylomeDB" id="Q54QD1"/>
<dbReference type="PRO" id="PR:Q54QD1"/>
<dbReference type="Proteomes" id="UP000002195">
    <property type="component" value="Chromosome 4"/>
</dbReference>
<dbReference type="GO" id="GO:0004315">
    <property type="term" value="F:3-oxoacyl-[acyl-carrier-protein] synthase activity"/>
    <property type="evidence" value="ECO:0007669"/>
    <property type="project" value="InterPro"/>
</dbReference>
<dbReference type="GO" id="GO:0016491">
    <property type="term" value="F:oxidoreductase activity"/>
    <property type="evidence" value="ECO:0007669"/>
    <property type="project" value="InterPro"/>
</dbReference>
<dbReference type="GO" id="GO:0006633">
    <property type="term" value="P:fatty acid biosynthetic process"/>
    <property type="evidence" value="ECO:0000318"/>
    <property type="project" value="GO_Central"/>
</dbReference>
<dbReference type="CDD" id="cd05195">
    <property type="entry name" value="enoyl_red"/>
    <property type="match status" value="1"/>
</dbReference>
<dbReference type="CDD" id="cd08954">
    <property type="entry name" value="KR_1_FAS_SDR_x"/>
    <property type="match status" value="1"/>
</dbReference>
<dbReference type="CDD" id="cd00833">
    <property type="entry name" value="PKS"/>
    <property type="match status" value="1"/>
</dbReference>
<dbReference type="Gene3D" id="3.30.70.3290">
    <property type="match status" value="1"/>
</dbReference>
<dbReference type="Gene3D" id="3.40.47.10">
    <property type="match status" value="1"/>
</dbReference>
<dbReference type="Gene3D" id="1.10.1200.10">
    <property type="entry name" value="ACP-like"/>
    <property type="match status" value="1"/>
</dbReference>
<dbReference type="Gene3D" id="3.40.366.10">
    <property type="entry name" value="Malonyl-Coenzyme A Acyl Carrier Protein, domain 2"/>
    <property type="match status" value="1"/>
</dbReference>
<dbReference type="Gene3D" id="3.90.180.10">
    <property type="entry name" value="Medium-chain alcohol dehydrogenases, catalytic domain"/>
    <property type="match status" value="1"/>
</dbReference>
<dbReference type="Gene3D" id="3.40.50.720">
    <property type="entry name" value="NAD(P)-binding Rossmann-like Domain"/>
    <property type="match status" value="2"/>
</dbReference>
<dbReference type="Gene3D" id="3.10.129.110">
    <property type="entry name" value="Polyketide synthase dehydratase"/>
    <property type="match status" value="1"/>
</dbReference>
<dbReference type="Gene3D" id="3.40.50.150">
    <property type="entry name" value="Vaccinia Virus protein VP39"/>
    <property type="match status" value="1"/>
</dbReference>
<dbReference type="InterPro" id="IPR001227">
    <property type="entry name" value="Ac_transferase_dom_sf"/>
</dbReference>
<dbReference type="InterPro" id="IPR036736">
    <property type="entry name" value="ACP-like_sf"/>
</dbReference>
<dbReference type="InterPro" id="IPR014043">
    <property type="entry name" value="Acyl_transferase_dom"/>
</dbReference>
<dbReference type="InterPro" id="IPR016035">
    <property type="entry name" value="Acyl_Trfase/lysoPLipase"/>
</dbReference>
<dbReference type="InterPro" id="IPR013154">
    <property type="entry name" value="ADH-like_N"/>
</dbReference>
<dbReference type="InterPro" id="IPR011032">
    <property type="entry name" value="GroES-like_sf"/>
</dbReference>
<dbReference type="InterPro" id="IPR018201">
    <property type="entry name" value="Ketoacyl_synth_AS"/>
</dbReference>
<dbReference type="InterPro" id="IPR014031">
    <property type="entry name" value="Ketoacyl_synth_C"/>
</dbReference>
<dbReference type="InterPro" id="IPR014030">
    <property type="entry name" value="Ketoacyl_synth_N"/>
</dbReference>
<dbReference type="InterPro" id="IPR013217">
    <property type="entry name" value="Methyltransf_12"/>
</dbReference>
<dbReference type="InterPro" id="IPR036291">
    <property type="entry name" value="NAD(P)-bd_dom_sf"/>
</dbReference>
<dbReference type="InterPro" id="IPR032821">
    <property type="entry name" value="PKS_assoc"/>
</dbReference>
<dbReference type="InterPro" id="IPR020841">
    <property type="entry name" value="PKS_Beta-ketoAc_synthase_dom"/>
</dbReference>
<dbReference type="InterPro" id="IPR042104">
    <property type="entry name" value="PKS_dehydratase_sf"/>
</dbReference>
<dbReference type="InterPro" id="IPR020843">
    <property type="entry name" value="PKS_ER"/>
</dbReference>
<dbReference type="InterPro" id="IPR013968">
    <property type="entry name" value="PKS_KR"/>
</dbReference>
<dbReference type="InterPro" id="IPR049900">
    <property type="entry name" value="PKS_mFAS_DH"/>
</dbReference>
<dbReference type="InterPro" id="IPR050444">
    <property type="entry name" value="Polyketide_Synthase"/>
</dbReference>
<dbReference type="InterPro" id="IPR009081">
    <property type="entry name" value="PP-bd_ACP"/>
</dbReference>
<dbReference type="InterPro" id="IPR029063">
    <property type="entry name" value="SAM-dependent_MTases_sf"/>
</dbReference>
<dbReference type="InterPro" id="IPR016039">
    <property type="entry name" value="Thiolase-like"/>
</dbReference>
<dbReference type="PANTHER" id="PTHR45681:SF1">
    <property type="entry name" value="POLYKETIDE SYNTHASE 2-RELATED"/>
    <property type="match status" value="1"/>
</dbReference>
<dbReference type="PANTHER" id="PTHR45681">
    <property type="entry name" value="POLYKETIDE SYNTHASE 44-RELATED"/>
    <property type="match status" value="1"/>
</dbReference>
<dbReference type="Pfam" id="PF23297">
    <property type="entry name" value="ACP_SdgA_C"/>
    <property type="match status" value="1"/>
</dbReference>
<dbReference type="Pfam" id="PF00698">
    <property type="entry name" value="Acyl_transf_1"/>
    <property type="match status" value="1"/>
</dbReference>
<dbReference type="Pfam" id="PF08240">
    <property type="entry name" value="ADH_N"/>
    <property type="match status" value="1"/>
</dbReference>
<dbReference type="Pfam" id="PF13602">
    <property type="entry name" value="ADH_zinc_N_2"/>
    <property type="match status" value="1"/>
</dbReference>
<dbReference type="Pfam" id="PF16197">
    <property type="entry name" value="KAsynt_C_assoc"/>
    <property type="match status" value="1"/>
</dbReference>
<dbReference type="Pfam" id="PF00109">
    <property type="entry name" value="ketoacyl-synt"/>
    <property type="match status" value="1"/>
</dbReference>
<dbReference type="Pfam" id="PF02801">
    <property type="entry name" value="Ketoacyl-synt_C"/>
    <property type="match status" value="1"/>
</dbReference>
<dbReference type="Pfam" id="PF08659">
    <property type="entry name" value="KR"/>
    <property type="match status" value="1"/>
</dbReference>
<dbReference type="Pfam" id="PF08242">
    <property type="entry name" value="Methyltransf_12"/>
    <property type="match status" value="1"/>
</dbReference>
<dbReference type="SMART" id="SM00827">
    <property type="entry name" value="PKS_AT"/>
    <property type="match status" value="1"/>
</dbReference>
<dbReference type="SMART" id="SM00829">
    <property type="entry name" value="PKS_ER"/>
    <property type="match status" value="1"/>
</dbReference>
<dbReference type="SMART" id="SM00822">
    <property type="entry name" value="PKS_KR"/>
    <property type="match status" value="1"/>
</dbReference>
<dbReference type="SMART" id="SM00825">
    <property type="entry name" value="PKS_KS"/>
    <property type="match status" value="1"/>
</dbReference>
<dbReference type="SUPFAM" id="SSF47336">
    <property type="entry name" value="ACP-like"/>
    <property type="match status" value="1"/>
</dbReference>
<dbReference type="SUPFAM" id="SSF52151">
    <property type="entry name" value="FabD/lysophospholipase-like"/>
    <property type="match status" value="1"/>
</dbReference>
<dbReference type="SUPFAM" id="SSF50129">
    <property type="entry name" value="GroES-like"/>
    <property type="match status" value="1"/>
</dbReference>
<dbReference type="SUPFAM" id="SSF51735">
    <property type="entry name" value="NAD(P)-binding Rossmann-fold domains"/>
    <property type="match status" value="2"/>
</dbReference>
<dbReference type="SUPFAM" id="SSF53335">
    <property type="entry name" value="S-adenosyl-L-methionine-dependent methyltransferases"/>
    <property type="match status" value="1"/>
</dbReference>
<dbReference type="SUPFAM" id="SSF53901">
    <property type="entry name" value="Thiolase-like"/>
    <property type="match status" value="1"/>
</dbReference>
<dbReference type="PROSITE" id="PS50075">
    <property type="entry name" value="CARRIER"/>
    <property type="match status" value="1"/>
</dbReference>
<dbReference type="PROSITE" id="PS00606">
    <property type="entry name" value="KS3_1"/>
    <property type="match status" value="1"/>
</dbReference>
<dbReference type="PROSITE" id="PS52004">
    <property type="entry name" value="KS3_2"/>
    <property type="match status" value="1"/>
</dbReference>
<dbReference type="PROSITE" id="PS52019">
    <property type="entry name" value="PKS_MFAS_DH"/>
    <property type="match status" value="1"/>
</dbReference>
<proteinExistence type="inferred from homology"/>
<name>PKS23_DICDI</name>
<sequence>MIEGNFEKNNDNQVAIVGLGLRLPGNSGSPLEFWKNLLDGFDGIVDSNQRWSDTLHSIGEISNKNAGLIDLEENWHSFEPLFFGINPTDAKQIDPQIKLMLKLTWEAFEDASIDPLKLRGTNTSVFVGAANTDYSLINFEQNEAPINIFNGTLSAFANRISYCFDLRGTSLTLDTACSSSLNAVHLGYESIVNGKSNYSVVAGCNILLNPYITRSFHSINITGKSGRCNSFDESADGFVRSEGVVVLILKRLSLAIQDGDQIYCVMKGSSSNVDGTFKKTNFFAPSKNAQSTNIKNAFLSSNGAMKYQDIDFFELHSTGTQVGDPIEVEAVADIFKNVKQEPLLIGSVKSNIGHLEPASGVASLAKVCLMFKHRQFVKNIHFNNPNPNIKFKEWNVKVCTETTAFPDRQVSMAINSFGITGSNACVLLSEYIKPSEIKNQTSMKLNEKSKLLIPISTNSKKSLEQFKSKLLEEIDTYSESLTFEEFAMFQVYSKTTKLSQRSVLIGNDWNDLKIDINEIISTKNNKSGNIIKSNDINPPLVFSFCGQGPQYSKMGLNLYQNEPIFKEFMDLLDSILFKYFGYSIIQKLRSINDDPILINEPILALPSIFMIQISLYKLYLHWGITPSIIVGHSLGEVASAFCSGMIDLETACFVIYKRATIQNKTNGSGRLLAISLNLEEFNNQFSKEYPEIEISCFNSPSSIVVCGNELDILNISKSLKEKQIFNSLLGTSSAFHSSKQDIIKDEIIESTNHIQSRPPSITIFSTVTSNKFDKNTPYDSNYIFDNIRKPVLFQQTIENIFKYIESNDLGNSVIFLELSPHPTLNHYVKEMIPKNSNYFLNKDSISVLSSLNKKKEDINEIQSTISQLYCFGYNIDFSAQFKSEITSNSFKKCSYLIPHYQWDESLFWREGISSINNRKNGASINQLGNKNELSPHISYTSYIDIKEEPFRFLKDHQFRGKSLFPGVGYLDIILKLFPNQDLTIPLLEFKSQFVLTEGVKKTLTTNLYKSAKNEYRATFNFKDQTSGKWIQSANSRILMKSLDVTVKKVDVQSIRDQCNWSTLKREQLYDLIKNYSNISLLESFQRIEEASYGDNRCLCKVSLDPTSSYDNESFLNICIIDTCIHPCIFFDNPASSVFERIEHLKIYSSSVPLTAEDRVKQQYVYCYVELIKKYSDFIYFKTTCFLKDGTVLLHSPLVTIASTLSTNIDTNIECPNNQLFSQCLQPKDSILQSPLILKEYFNQQLQLQQSNIISISTLSSYLFSTLKKILNNLTTDEFQNGSLEEFIGKYSYILEEIQEASTFRSNLIFLSINFLLTHHKHIDQNQVSNFLLNNIPNELLVLDTIVSNKGISHIGIYQHQLILDIISKSIIPIVNEKIVFRILEIGCGVGELTKLINDKLESILNDNPSYNIDIEFVFSDYTDSKVLLIKERLFNSKKSCFFKIIDLNKQLQEQSFSPSYYDLIILSNTTNQIKDIKTSISFINEILTPNGHLLILDTNFIQTSIDEDYYLENYKQWLSFNYLNSGSGAMKLNQWNQLLINDLKFNNFICSTGEIEPYLIQVQKSNLSNSINSVSKEHSSEYDQIIIFGTCDEINIGSSFYGLVPIAINSIDKFKEHVKLQPLTDKSLILFIESVNLLTVDNFNQVSMNYIEINQHLLKNEISGCKHILISRNVNFETSNLFGSSLIGSFRYFCEFNQLNIYSFEFEGNNILSGDGGDKLFNIIQELSNSNKHSQNEFSIRSDGKIYYERIKLESNLKLKYKSKSYIENKNELVSRLKPDLTFALEAVLPLNPNFVEVKVMASGVNFKDFLVYRQLINMANSNENGDPSKPQFGYELSGIVTKVGKNVTKFKVGDHVMGGAFHTFSSSVHVDQDRIELKPSNISWFEASQSLVYLTSYCSLFELGRLDLYGSTETVLIHSGSGGIGLSCIDLLQVYGFKGFLFVTVGSEEKKQFLKDRYGNFITEIYSTKNTDYEYLIKEKLIELKAPSQEYGSFSMICVDLIINTLSADYMDANFNCLSQGGRIIDLSITHMTTTDTTDFYKFRNHIGYMTYESVIAGFRKHKHVLKIIVDLLASGKLKTIPFNVYPVTKIKEAIESLGDRKHIGKNIVNFNDPEGIDLIDCPEFSNNHNFIHPSSNYKIHQDTLGKTILITGQAGLSDTIIKWIREKRSDSIESIIVLSKSPIKFELERAIGRIRSTNLKIYFKQVDISDEKLLLKSINQLFEENKDIKPIESIFHNAFSPAECEPLEIDMNHLISSHSAKSMGAYNLHKLSLNWPIKQFVLSSSVTSILGSQRQCGYVASNCFIDALSRHRKSLNLPCISINWGLLGGGGFAARNDAVFKLFELQGSVGISKDLVWGSLDLLLQNQNESTNKMVASFEFHATCKTYKYHKLSYKLDYFLNPIISKESVTDEKEFSIRQDIVDKFASLLSTDQSKLNLDIKVIDYGADSLLVVEVKNWADNIFARNILSMPEIQNSTINQIINIVTTKVSNLPSKKK</sequence>
<keyword id="KW-0596">Phosphopantetheine</keyword>
<keyword id="KW-0597">Phosphoprotein</keyword>
<keyword id="KW-1185">Reference proteome</keyword>
<keyword id="KW-0808">Transferase</keyword>
<accession>Q54QD1</accession>
<organism>
    <name type="scientific">Dictyostelium discoideum</name>
    <name type="common">Social amoeba</name>
    <dbReference type="NCBI Taxonomy" id="44689"/>
    <lineage>
        <taxon>Eukaryota</taxon>
        <taxon>Amoebozoa</taxon>
        <taxon>Evosea</taxon>
        <taxon>Eumycetozoa</taxon>
        <taxon>Dictyostelia</taxon>
        <taxon>Dictyosteliales</taxon>
        <taxon>Dictyosteliaceae</taxon>
        <taxon>Dictyostelium</taxon>
    </lineage>
</organism>